<name>VM1T1_PROMU</name>
<comment type="function">
    <text evidence="2 3 4 5">Potent fibrinogenolytic protease which cleaves mainly the Aalpha (FGA) and Bbeta (FGB) chains of fibrinogen and slightly the gamma chain (FGG) (PubMed:7488093, PubMed:8193588). Shows preference for substrates having a moderate-size and hydrophobic residue at the P1' position. Preferentially cleaves Ala-|-Leu and Tyr-|-Leu bonds (PubMed:23732127). Is more susceptible to tripeptide inhibitors than TM-3 (AC O57413) (PubMed:9703966).</text>
</comment>
<comment type="cofactor">
    <cofactor evidence="9">
        <name>Zn(2+)</name>
        <dbReference type="ChEBI" id="CHEBI:29105"/>
    </cofactor>
    <text evidence="2">Binds 1 zinc ion per subunit.</text>
</comment>
<comment type="activity regulation">
    <text evidence="4 5">Inhibited by EDTA and 1,10-phenanthroline (PubMed:8193588). Is also inhibited by endogenous tripeptide inhibitors pyroGlu-Asn-Trp, pyroGlu-Gln-Trp, and pyroGlu-Lys-Trp (PubMed:9703966).</text>
</comment>
<comment type="subunit">
    <text evidence="3 4">Monomer.</text>
</comment>
<comment type="subcellular location">
    <subcellularLocation>
        <location evidence="3 4">Secreted</location>
    </subcellularLocation>
</comment>
<comment type="tissue specificity">
    <text evidence="10 11">Expressed by the venom gland.</text>
</comment>
<comment type="PTM">
    <text evidence="3">The N-terminus is blocked.</text>
</comment>
<comment type="PTM">
    <text evidence="2">Not glycosylated.</text>
</comment>
<comment type="similarity">
    <text evidence="8">Belongs to the venom metalloproteinase (M12B) family. P-I subfamily.</text>
</comment>
<protein>
    <recommendedName>
        <fullName evidence="6 7">Snake venom metalloproteinase TM-1</fullName>
        <shortName>SVMP</shortName>
        <ecNumber>3.4.24.-</ecNumber>
    </recommendedName>
    <alternativeName>
        <fullName>Zinc-dependent metalloproteinase</fullName>
    </alternativeName>
</protein>
<dbReference type="EC" id="3.4.24.-"/>
<dbReference type="PDB" id="4J4M">
    <property type="method" value="X-ray"/>
    <property type="resolution" value="1.80 A"/>
    <property type="chains" value="A/B=1-202"/>
</dbReference>
<dbReference type="PDBsum" id="4J4M"/>
<dbReference type="SMR" id="U3KRG1"/>
<dbReference type="MEROPS" id="M12.155"/>
<dbReference type="EvolutionaryTrace" id="U3KRG1"/>
<dbReference type="GO" id="GO:0005576">
    <property type="term" value="C:extracellular region"/>
    <property type="evidence" value="ECO:0007669"/>
    <property type="project" value="UniProtKB-SubCell"/>
</dbReference>
<dbReference type="GO" id="GO:0046872">
    <property type="term" value="F:metal ion binding"/>
    <property type="evidence" value="ECO:0007669"/>
    <property type="project" value="UniProtKB-KW"/>
</dbReference>
<dbReference type="GO" id="GO:0004222">
    <property type="term" value="F:metalloendopeptidase activity"/>
    <property type="evidence" value="ECO:0007669"/>
    <property type="project" value="InterPro"/>
</dbReference>
<dbReference type="GO" id="GO:0006508">
    <property type="term" value="P:proteolysis"/>
    <property type="evidence" value="ECO:0007669"/>
    <property type="project" value="UniProtKB-KW"/>
</dbReference>
<dbReference type="CDD" id="cd04269">
    <property type="entry name" value="ZnMc_adamalysin_II_like"/>
    <property type="match status" value="1"/>
</dbReference>
<dbReference type="FunFam" id="3.40.390.10:FF:000002">
    <property type="entry name" value="Disintegrin and metalloproteinase domain-containing protein 22"/>
    <property type="match status" value="1"/>
</dbReference>
<dbReference type="Gene3D" id="3.40.390.10">
    <property type="entry name" value="Collagenase (Catalytic Domain)"/>
    <property type="match status" value="1"/>
</dbReference>
<dbReference type="InterPro" id="IPR024079">
    <property type="entry name" value="MetalloPept_cat_dom_sf"/>
</dbReference>
<dbReference type="InterPro" id="IPR001590">
    <property type="entry name" value="Peptidase_M12B"/>
</dbReference>
<dbReference type="InterPro" id="IPR034027">
    <property type="entry name" value="Reprolysin_adamalysin"/>
</dbReference>
<dbReference type="PANTHER" id="PTHR11905">
    <property type="entry name" value="ADAM A DISINTEGRIN AND METALLOPROTEASE DOMAIN"/>
    <property type="match status" value="1"/>
</dbReference>
<dbReference type="PANTHER" id="PTHR11905:SF159">
    <property type="entry name" value="ADAM METALLOPROTEASE"/>
    <property type="match status" value="1"/>
</dbReference>
<dbReference type="Pfam" id="PF01421">
    <property type="entry name" value="Reprolysin"/>
    <property type="match status" value="1"/>
</dbReference>
<dbReference type="SUPFAM" id="SSF55486">
    <property type="entry name" value="Metalloproteases ('zincins'), catalytic domain"/>
    <property type="match status" value="1"/>
</dbReference>
<dbReference type="PROSITE" id="PS50215">
    <property type="entry name" value="ADAM_MEPRO"/>
    <property type="match status" value="1"/>
</dbReference>
<dbReference type="PROSITE" id="PS00142">
    <property type="entry name" value="ZINC_PROTEASE"/>
    <property type="match status" value="1"/>
</dbReference>
<proteinExistence type="evidence at protein level"/>
<keyword id="KW-0002">3D-structure</keyword>
<keyword id="KW-0903">Direct protein sequencing</keyword>
<keyword id="KW-1015">Disulfide bond</keyword>
<keyword id="KW-0378">Hydrolase</keyword>
<keyword id="KW-0479">Metal-binding</keyword>
<keyword id="KW-0482">Metalloprotease</keyword>
<keyword id="KW-0645">Protease</keyword>
<keyword id="KW-0873">Pyrrolidone carboxylic acid</keyword>
<keyword id="KW-0964">Secreted</keyword>
<keyword id="KW-0862">Zinc</keyword>
<sequence>QQRFPQRYVMLAIVADHGMVTKYSGNSSAITTRVHQMVSHVTEMYSPLNIATTLSLLRIWSSKDLITVQSDSSVTLGSFGDWRKVVLLSQQAHDCAFLNTATALDDSTIGLAYSNGMCDPKFSVGLVQDHSSNVFMVAVTMTHELGHNLGMAHDEAGGCACSSCIMSPAASSGPSKLFSDCSKDDYQTFLTNTNPQCILNAP</sequence>
<organism>
    <name type="scientific">Protobothrops mucrosquamatus</name>
    <name type="common">Taiwan habu</name>
    <name type="synonym">Trimeresurus mucrosquamatus</name>
    <dbReference type="NCBI Taxonomy" id="103944"/>
    <lineage>
        <taxon>Eukaryota</taxon>
        <taxon>Metazoa</taxon>
        <taxon>Chordata</taxon>
        <taxon>Craniata</taxon>
        <taxon>Vertebrata</taxon>
        <taxon>Euteleostomi</taxon>
        <taxon>Lepidosauria</taxon>
        <taxon>Squamata</taxon>
        <taxon>Bifurcata</taxon>
        <taxon>Unidentata</taxon>
        <taxon>Episquamata</taxon>
        <taxon>Toxicofera</taxon>
        <taxon>Serpentes</taxon>
        <taxon>Colubroidea</taxon>
        <taxon>Viperidae</taxon>
        <taxon>Crotalinae</taxon>
        <taxon>Protobothrops</taxon>
    </lineage>
</organism>
<feature type="chain" id="PRO_0000448286" description="Snake venom metalloproteinase TM-1">
    <location>
        <begin position="1"/>
        <end position="202"/>
    </location>
</feature>
<feature type="domain" description="Peptidase M12B" evidence="1">
    <location>
        <begin position="7"/>
        <end position="202"/>
    </location>
</feature>
<feature type="active site" evidence="9">
    <location>
        <position position="144"/>
    </location>
</feature>
<feature type="binding site" evidence="13">
    <location>
        <position position="143"/>
    </location>
    <ligand>
        <name>Zn(2+)</name>
        <dbReference type="ChEBI" id="CHEBI:29105"/>
        <note>catalytic</note>
    </ligand>
</feature>
<feature type="binding site" evidence="13">
    <location>
        <position position="147"/>
    </location>
    <ligand>
        <name>Zn(2+)</name>
        <dbReference type="ChEBI" id="CHEBI:29105"/>
        <note>catalytic</note>
    </ligand>
</feature>
<feature type="binding site" evidence="13">
    <location>
        <position position="153"/>
    </location>
    <ligand>
        <name>Zn(2+)</name>
        <dbReference type="ChEBI" id="CHEBI:29105"/>
        <note>catalytic</note>
    </ligand>
</feature>
<feature type="modified residue" description="Pyrrolidone carboxylic acid" evidence="10 11">
    <location>
        <position position="1"/>
    </location>
</feature>
<feature type="disulfide bond" evidence="2 13">
    <location>
        <begin position="118"/>
        <end position="197"/>
    </location>
</feature>
<feature type="disulfide bond" evidence="2 13">
    <location>
        <begin position="159"/>
        <end position="181"/>
    </location>
</feature>
<feature type="disulfide bond" evidence="2 13">
    <location>
        <begin position="161"/>
        <end position="164"/>
    </location>
</feature>
<feature type="sequence conflict" description="In Ref. 2; AA sequence." evidence="8" ref="2">
    <original>S</original>
    <variation>K</variation>
    <location>
        <position position="46"/>
    </location>
</feature>
<feature type="strand" evidence="14">
    <location>
        <begin position="7"/>
        <end position="15"/>
    </location>
</feature>
<feature type="helix" evidence="14">
    <location>
        <begin position="17"/>
        <end position="22"/>
    </location>
</feature>
<feature type="turn" evidence="14">
    <location>
        <begin position="23"/>
        <end position="25"/>
    </location>
</feature>
<feature type="helix" evidence="14">
    <location>
        <begin position="27"/>
        <end position="45"/>
    </location>
</feature>
<feature type="helix" evidence="14">
    <location>
        <begin position="46"/>
        <end position="48"/>
    </location>
</feature>
<feature type="strand" evidence="14">
    <location>
        <begin position="50"/>
        <end position="59"/>
    </location>
</feature>
<feature type="strand" evidence="14">
    <location>
        <begin position="61"/>
        <end position="63"/>
    </location>
</feature>
<feature type="helix" evidence="14">
    <location>
        <begin position="72"/>
        <end position="85"/>
    </location>
</feature>
<feature type="helix" evidence="14">
    <location>
        <begin position="87"/>
        <end position="90"/>
    </location>
</feature>
<feature type="strand" evidence="14">
    <location>
        <begin position="94"/>
        <end position="100"/>
    </location>
</feature>
<feature type="strand" evidence="14">
    <location>
        <begin position="110"/>
        <end position="112"/>
    </location>
</feature>
<feature type="turn" evidence="14">
    <location>
        <begin position="120"/>
        <end position="122"/>
    </location>
</feature>
<feature type="strand" evidence="14">
    <location>
        <begin position="124"/>
        <end position="128"/>
    </location>
</feature>
<feature type="helix" evidence="14">
    <location>
        <begin position="134"/>
        <end position="148"/>
    </location>
</feature>
<feature type="turn" evidence="14">
    <location>
        <begin position="156"/>
        <end position="158"/>
    </location>
</feature>
<feature type="helix" evidence="14">
    <location>
        <begin position="180"/>
        <end position="192"/>
    </location>
</feature>
<feature type="helix" evidence="14">
    <location>
        <begin position="197"/>
        <end position="199"/>
    </location>
</feature>
<evidence type="ECO:0000255" key="1"/>
<evidence type="ECO:0000269" key="2">
    <source>
    </source>
</evidence>
<evidence type="ECO:0000269" key="3">
    <source>
    </source>
</evidence>
<evidence type="ECO:0000269" key="4">
    <source>
    </source>
</evidence>
<evidence type="ECO:0000269" key="5">
    <source>
    </source>
</evidence>
<evidence type="ECO:0000303" key="6">
    <source>
    </source>
</evidence>
<evidence type="ECO:0000303" key="7">
    <source>
    </source>
</evidence>
<evidence type="ECO:0000305" key="8"/>
<evidence type="ECO:0000305" key="9">
    <source>
    </source>
</evidence>
<evidence type="ECO:0000305" key="10">
    <source>
    </source>
</evidence>
<evidence type="ECO:0000305" key="11">
    <source>
    </source>
</evidence>
<evidence type="ECO:0000312" key="12">
    <source>
        <dbReference type="PDB" id="4J4M"/>
    </source>
</evidence>
<evidence type="ECO:0007744" key="13">
    <source>
        <dbReference type="PDB" id="4J4M"/>
    </source>
</evidence>
<evidence type="ECO:0007829" key="14">
    <source>
        <dbReference type="PDB" id="4J4M"/>
    </source>
</evidence>
<reference evidence="12" key="1">
    <citation type="journal article" date="2013" name="Toxicon">
        <title>Crystal structure of a Trimeresurus mucrosquamatus venom metalloproteinase providing new insights into the inhibition by endogenous tripeptide inhibitors.</title>
        <authorList>
            <person name="Chou T.L."/>
            <person name="Wu C.H."/>
            <person name="Huang K.F."/>
            <person name="Wang A.H."/>
        </authorList>
    </citation>
    <scope>PROTEIN SEQUENCE</scope>
    <scope>X-RAY CRYSTALLOGRAPHY (1.80 ANGSTROMS) IN COMPLEX WITH ZINC</scope>
    <scope>DISULFIDE BOND</scope>
    <source>
        <tissue>Venom</tissue>
    </source>
</reference>
<reference key="2">
    <citation type="journal article" date="1995" name="Biochem. Biophys. Res. Commun.">
        <title>Characterization of multiple metalloproteinases with fibrinogenolytic activity from the venom of Taiwan habu (Trimeresurus mucrosquamatus): protein microsequencing coupled with cDNA sequence analysis.</title>
        <authorList>
            <person name="Huang K.F."/>
            <person name="Hung C.C."/>
            <person name="Pan F.M."/>
            <person name="Chow L.P."/>
            <person name="Tsugita A."/>
            <person name="Chiou S.H."/>
        </authorList>
    </citation>
    <scope>PROTEIN SEQUENCE OF 45-59</scope>
    <scope>FUNCTION</scope>
    <scope>SUBCELLULAR LOCATION</scope>
    <scope>SUBUNIT</scope>
    <scope>PYROGLUTAMATE FORMATION AT GLN-1</scope>
    <source>
        <tissue>Venom</tissue>
    </source>
</reference>
<reference key="3">
    <citation type="journal article" date="1993" name="Biochem. Mol. Biol. Int.">
        <title>Characterization of three fibrinogenolytic proteases isolated from the venom of Taiwan habu (Trimeresurus mucrosquamatus).</title>
        <authorList>
            <person name="Huang K.-F."/>
            <person name="Hung C.C."/>
            <person name="Chiou S.-H."/>
        </authorList>
    </citation>
    <scope>FUNCTION</scope>
    <scope>ACTIVITY REGULATION</scope>
    <scope>SUBUNIT</scope>
    <scope>PYROGLUTAMATE FORMATION AT GLN-1</scope>
    <scope>SUBCELLULAR LOCATION</scope>
    <source>
        <tissue>Venom</tissue>
    </source>
</reference>
<reference key="4">
    <citation type="journal article" date="1998" name="Biochem. Biophys. Res. Commun.">
        <title>Characterization of three endogenous peptide inhibitors for multiple metalloproteinases with fibrinogenolytic activity from the venom of Taiwan habu (Trimeresurus mucrosquamatus).</title>
        <authorList>
            <person name="Huang K.F."/>
            <person name="Hung C.C."/>
            <person name="Wu S.H."/>
            <person name="Chiou S.H."/>
        </authorList>
    </citation>
    <scope>ACTIVITY REGULATION</scope>
</reference>
<accession>U3KRG1</accession>